<organism>
    <name type="scientific">Helicobacter pylori (strain ATCC 700392 / 26695)</name>
    <name type="common">Campylobacter pylori</name>
    <dbReference type="NCBI Taxonomy" id="85962"/>
    <lineage>
        <taxon>Bacteria</taxon>
        <taxon>Pseudomonadati</taxon>
        <taxon>Campylobacterota</taxon>
        <taxon>Epsilonproteobacteria</taxon>
        <taxon>Campylobacterales</taxon>
        <taxon>Helicobacteraceae</taxon>
        <taxon>Helicobacter</taxon>
    </lineage>
</organism>
<accession>P71405</accession>
<sequence length="171" mass="18342">MLDLSYSLERVLQEDPAARNKWEVLLLYPGIHALLCYRLAHALHKRRFYFIARALSQLARFITGIEIHPGAKIGRGLFIDHGMGVVIGETTEIGDDVTIYHGVTLGGTGKFKGKRHPTLGNRVVVGAGAKVLGAICVGDDVKIGANAVVLSDLPTGSTAVGSKAKTITKDR</sequence>
<dbReference type="EC" id="2.3.1.30"/>
<dbReference type="EMBL" id="U43917">
    <property type="protein sequence ID" value="AAB07027.1"/>
    <property type="molecule type" value="Genomic_DNA"/>
</dbReference>
<dbReference type="EMBL" id="AE000511">
    <property type="protein sequence ID" value="AAD08254.1"/>
    <property type="molecule type" value="Genomic_DNA"/>
</dbReference>
<dbReference type="PIR" id="B64671">
    <property type="entry name" value="B64671"/>
</dbReference>
<dbReference type="RefSeq" id="NP_208002.1">
    <property type="nucleotide sequence ID" value="NC_000915.1"/>
</dbReference>
<dbReference type="RefSeq" id="WP_000886346.1">
    <property type="nucleotide sequence ID" value="NC_018939.1"/>
</dbReference>
<dbReference type="SMR" id="P71405"/>
<dbReference type="FunCoup" id="P71405">
    <property type="interactions" value="285"/>
</dbReference>
<dbReference type="STRING" id="85962.HP_1210"/>
<dbReference type="PaxDb" id="85962-C694_06265"/>
<dbReference type="EnsemblBacteria" id="AAD08254">
    <property type="protein sequence ID" value="AAD08254"/>
    <property type="gene ID" value="HP_1210"/>
</dbReference>
<dbReference type="KEGG" id="heo:C694_06265"/>
<dbReference type="KEGG" id="hpy:HP_1210"/>
<dbReference type="PATRIC" id="fig|85962.47.peg.1301"/>
<dbReference type="eggNOG" id="COG1045">
    <property type="taxonomic scope" value="Bacteria"/>
</dbReference>
<dbReference type="InParanoid" id="P71405"/>
<dbReference type="OrthoDB" id="9801456at2"/>
<dbReference type="PhylomeDB" id="P71405"/>
<dbReference type="UniPathway" id="UPA00136">
    <property type="reaction ID" value="UER00199"/>
</dbReference>
<dbReference type="Proteomes" id="UP000000429">
    <property type="component" value="Chromosome"/>
</dbReference>
<dbReference type="GO" id="GO:0005829">
    <property type="term" value="C:cytosol"/>
    <property type="evidence" value="ECO:0000318"/>
    <property type="project" value="GO_Central"/>
</dbReference>
<dbReference type="GO" id="GO:0009001">
    <property type="term" value="F:serine O-acetyltransferase activity"/>
    <property type="evidence" value="ECO:0000318"/>
    <property type="project" value="GO_Central"/>
</dbReference>
<dbReference type="GO" id="GO:0006535">
    <property type="term" value="P:cysteine biosynthetic process from serine"/>
    <property type="evidence" value="ECO:0007669"/>
    <property type="project" value="InterPro"/>
</dbReference>
<dbReference type="CDD" id="cd03354">
    <property type="entry name" value="LbH_SAT"/>
    <property type="match status" value="1"/>
</dbReference>
<dbReference type="FunFam" id="1.10.3130.10:FF:000003">
    <property type="entry name" value="Serine acetyltransferase"/>
    <property type="match status" value="1"/>
</dbReference>
<dbReference type="FunFam" id="2.160.10.10:FF:000007">
    <property type="entry name" value="Serine acetyltransferase"/>
    <property type="match status" value="1"/>
</dbReference>
<dbReference type="Gene3D" id="2.160.10.10">
    <property type="entry name" value="Hexapeptide repeat proteins"/>
    <property type="match status" value="1"/>
</dbReference>
<dbReference type="Gene3D" id="1.10.3130.10">
    <property type="entry name" value="serine acetyltransferase, domain 1"/>
    <property type="match status" value="1"/>
</dbReference>
<dbReference type="InterPro" id="IPR001451">
    <property type="entry name" value="Hexapep"/>
</dbReference>
<dbReference type="InterPro" id="IPR018357">
    <property type="entry name" value="Hexapep_transf_CS"/>
</dbReference>
<dbReference type="InterPro" id="IPR045304">
    <property type="entry name" value="LbH_SAT"/>
</dbReference>
<dbReference type="InterPro" id="IPR042122">
    <property type="entry name" value="Ser_AcTrfase_N_sf"/>
</dbReference>
<dbReference type="InterPro" id="IPR005881">
    <property type="entry name" value="Ser_O-AcTrfase"/>
</dbReference>
<dbReference type="InterPro" id="IPR053376">
    <property type="entry name" value="Serine_acetyltransferase"/>
</dbReference>
<dbReference type="InterPro" id="IPR011004">
    <property type="entry name" value="Trimer_LpxA-like_sf"/>
</dbReference>
<dbReference type="NCBIfam" id="TIGR01172">
    <property type="entry name" value="cysE"/>
    <property type="match status" value="1"/>
</dbReference>
<dbReference type="NCBIfam" id="NF041874">
    <property type="entry name" value="EPS_EpsC"/>
    <property type="match status" value="1"/>
</dbReference>
<dbReference type="PANTHER" id="PTHR42811">
    <property type="entry name" value="SERINE ACETYLTRANSFERASE"/>
    <property type="match status" value="1"/>
</dbReference>
<dbReference type="Pfam" id="PF00132">
    <property type="entry name" value="Hexapep"/>
    <property type="match status" value="1"/>
</dbReference>
<dbReference type="PIRSF" id="PIRSF000441">
    <property type="entry name" value="CysE"/>
    <property type="match status" value="1"/>
</dbReference>
<dbReference type="SUPFAM" id="SSF51161">
    <property type="entry name" value="Trimeric LpxA-like enzymes"/>
    <property type="match status" value="1"/>
</dbReference>
<dbReference type="PROSITE" id="PS00101">
    <property type="entry name" value="HEXAPEP_TRANSFERASES"/>
    <property type="match status" value="1"/>
</dbReference>
<name>CYSE_HELPY</name>
<comment type="catalytic activity">
    <reaction>
        <text>L-serine + acetyl-CoA = O-acetyl-L-serine + CoA</text>
        <dbReference type="Rhea" id="RHEA:24560"/>
        <dbReference type="ChEBI" id="CHEBI:33384"/>
        <dbReference type="ChEBI" id="CHEBI:57287"/>
        <dbReference type="ChEBI" id="CHEBI:57288"/>
        <dbReference type="ChEBI" id="CHEBI:58340"/>
        <dbReference type="EC" id="2.3.1.30"/>
    </reaction>
</comment>
<comment type="pathway">
    <text>Amino-acid biosynthesis; L-cysteine biosynthesis; L-cysteine from L-serine: step 1/2.</text>
</comment>
<comment type="subcellular location">
    <subcellularLocation>
        <location evidence="1">Cytoplasm</location>
    </subcellularLocation>
</comment>
<comment type="similarity">
    <text evidence="2">Belongs to the transferase hexapeptide repeat family.</text>
</comment>
<gene>
    <name type="primary">cysE</name>
    <name type="ordered locus">HP_1210</name>
</gene>
<reference key="1">
    <citation type="submission" date="1996-09" db="EMBL/GenBank/DDBJ databases">
        <title>Expression of a novel ulcer-associated gene, iceA, by H. pylori following contact with gastric epithelium.</title>
        <authorList>
            <person name="Peek R.M. Jr."/>
            <person name="Thompson S.A."/>
            <person name="Atherton J.C."/>
            <person name="Blaser M.J."/>
            <person name="Miller G.G."/>
        </authorList>
    </citation>
    <scope>NUCLEOTIDE SEQUENCE [GENOMIC DNA]</scope>
    <source>
        <strain>ATCC 49503 / 60190</strain>
    </source>
</reference>
<reference key="2">
    <citation type="journal article" date="1997" name="Nature">
        <title>The complete genome sequence of the gastric pathogen Helicobacter pylori.</title>
        <authorList>
            <person name="Tomb J.-F."/>
            <person name="White O."/>
            <person name="Kerlavage A.R."/>
            <person name="Clayton R.A."/>
            <person name="Sutton G.G."/>
            <person name="Fleischmann R.D."/>
            <person name="Ketchum K.A."/>
            <person name="Klenk H.-P."/>
            <person name="Gill S.R."/>
            <person name="Dougherty B.A."/>
            <person name="Nelson K.E."/>
            <person name="Quackenbush J."/>
            <person name="Zhou L."/>
            <person name="Kirkness E.F."/>
            <person name="Peterson S.N."/>
            <person name="Loftus B.J."/>
            <person name="Richardson D.L."/>
            <person name="Dodson R.J."/>
            <person name="Khalak H.G."/>
            <person name="Glodek A."/>
            <person name="McKenney K."/>
            <person name="FitzGerald L.M."/>
            <person name="Lee N."/>
            <person name="Adams M.D."/>
            <person name="Hickey E.K."/>
            <person name="Berg D.E."/>
            <person name="Gocayne J.D."/>
            <person name="Utterback T.R."/>
            <person name="Peterson J.D."/>
            <person name="Kelley J.M."/>
            <person name="Cotton M.D."/>
            <person name="Weidman J.F."/>
            <person name="Fujii C."/>
            <person name="Bowman C."/>
            <person name="Watthey L."/>
            <person name="Wallin E."/>
            <person name="Hayes W.S."/>
            <person name="Borodovsky M."/>
            <person name="Karp P.D."/>
            <person name="Smith H.O."/>
            <person name="Fraser C.M."/>
            <person name="Venter J.C."/>
        </authorList>
    </citation>
    <scope>NUCLEOTIDE SEQUENCE [LARGE SCALE GENOMIC DNA]</scope>
    <source>
        <strain>ATCC 700392 / 26695</strain>
    </source>
</reference>
<feature type="chain" id="PRO_0000068675" description="Serine acetyltransferase">
    <location>
        <begin position="1"/>
        <end position="171"/>
    </location>
</feature>
<feature type="sequence variant" description="In strain: 60190.">
    <original>S</original>
    <variation>F</variation>
    <location>
        <position position="5"/>
    </location>
</feature>
<feature type="sequence variant" description="In strain: 60190.">
    <original>K</original>
    <variation>R</variation>
    <location>
        <position position="110"/>
    </location>
</feature>
<feature type="sequence variant" description="In strain: 60190.">
    <original>S</original>
    <variation>T</variation>
    <location>
        <position position="162"/>
    </location>
</feature>
<protein>
    <recommendedName>
        <fullName>Serine acetyltransferase</fullName>
        <shortName>SAT</shortName>
        <ecNumber>2.3.1.30</ecNumber>
    </recommendedName>
</protein>
<keyword id="KW-0012">Acyltransferase</keyword>
<keyword id="KW-0028">Amino-acid biosynthesis</keyword>
<keyword id="KW-0198">Cysteine biosynthesis</keyword>
<keyword id="KW-0963">Cytoplasm</keyword>
<keyword id="KW-1185">Reference proteome</keyword>
<keyword id="KW-0677">Repeat</keyword>
<keyword id="KW-0808">Transferase</keyword>
<proteinExistence type="inferred from homology"/>
<evidence type="ECO:0000250" key="1"/>
<evidence type="ECO:0000305" key="2"/>